<keyword id="KW-0012">Acyltransferase</keyword>
<keyword id="KW-1185">Reference proteome</keyword>
<keyword id="KW-0964">Secreted</keyword>
<keyword id="KW-0732">Signal</keyword>
<keyword id="KW-0808">Transferase</keyword>
<feature type="signal peptide" evidence="2">
    <location>
        <begin position="1"/>
        <end position="36"/>
    </location>
</feature>
<feature type="chain" id="PRO_0000000229" description="MPT51 antigen">
    <location>
        <begin position="37"/>
        <end position="301"/>
    </location>
</feature>
<feature type="sequence conflict" description="In Ref. 1; BAA09079." evidence="3" ref="1">
    <original>S</original>
    <variation>F</variation>
    <location>
        <position position="41"/>
    </location>
</feature>
<feature type="sequence conflict" description="In Ref. 1; BAA09079." evidence="3" ref="1">
    <original>APQLAAMSGDIVGAIR</original>
    <variation>GAAVGCYVGRYRRRHSLGRNQWHGRCCGDEPVSCMGRARMVSGEHRHRTPYVHRNLPRDLPILLAGDPEWSRKCHVSATESSPGRLPCRWRPSWRWPLWLW</variation>
    <location>
        <begin position="286"/>
        <end position="301"/>
    </location>
</feature>
<organism>
    <name type="scientific">Mycobacterium leprae (strain TN)</name>
    <dbReference type="NCBI Taxonomy" id="272631"/>
    <lineage>
        <taxon>Bacteria</taxon>
        <taxon>Bacillati</taxon>
        <taxon>Actinomycetota</taxon>
        <taxon>Actinomycetes</taxon>
        <taxon>Mycobacteriales</taxon>
        <taxon>Mycobacteriaceae</taxon>
        <taxon>Mycobacterium</taxon>
    </lineage>
</organism>
<protein>
    <recommendedName>
        <fullName>MPT51 antigen</fullName>
    </recommendedName>
</protein>
<reference key="1">
    <citation type="submission" date="1995-05" db="EMBL/GenBank/DDBJ databases">
        <title>Studies of MPT51 like protein of Mycobacterium leprae.</title>
        <authorList>
            <person name="Yin Y."/>
        </authorList>
    </citation>
    <scope>NUCLEOTIDE SEQUENCE [GENOMIC DNA]</scope>
    <source>
        <strain>Thai53</strain>
    </source>
</reference>
<reference key="2">
    <citation type="journal article" date="2001" name="Nature">
        <title>Massive gene decay in the leprosy bacillus.</title>
        <authorList>
            <person name="Cole S.T."/>
            <person name="Eiglmeier K."/>
            <person name="Parkhill J."/>
            <person name="James K.D."/>
            <person name="Thomson N.R."/>
            <person name="Wheeler P.R."/>
            <person name="Honore N."/>
            <person name="Garnier T."/>
            <person name="Churcher C.M."/>
            <person name="Harris D.E."/>
            <person name="Mungall K.L."/>
            <person name="Basham D."/>
            <person name="Brown D."/>
            <person name="Chillingworth T."/>
            <person name="Connor R."/>
            <person name="Davies R.M."/>
            <person name="Devlin K."/>
            <person name="Duthoy S."/>
            <person name="Feltwell T."/>
            <person name="Fraser A."/>
            <person name="Hamlin N."/>
            <person name="Holroyd S."/>
            <person name="Hornsby T."/>
            <person name="Jagels K."/>
            <person name="Lacroix C."/>
            <person name="Maclean J."/>
            <person name="Moule S."/>
            <person name="Murphy L.D."/>
            <person name="Oliver K."/>
            <person name="Quail M.A."/>
            <person name="Rajandream M.A."/>
            <person name="Rutherford K.M."/>
            <person name="Rutter S."/>
            <person name="Seeger K."/>
            <person name="Simon S."/>
            <person name="Simmonds M."/>
            <person name="Skelton J."/>
            <person name="Squares R."/>
            <person name="Squares S."/>
            <person name="Stevens K."/>
            <person name="Taylor K."/>
            <person name="Whitehead S."/>
            <person name="Woodward J.R."/>
            <person name="Barrell B.G."/>
        </authorList>
    </citation>
    <scope>NUCLEOTIDE SEQUENCE [LARGE SCALE GENOMIC DNA]</scope>
    <source>
        <strain>TN</strain>
    </source>
</reference>
<reference key="3">
    <citation type="journal article" date="1993" name="Infect. Immun.">
        <title>The Mycobacterium leprae antigen 85 complex gene family: identification of the genes for the 85A, 85C, and related MPT51 proteins.</title>
        <authorList>
            <person name="Rinke de Wit T.F."/>
            <person name="Bekelie S."/>
            <person name="Osland A."/>
            <person name="Wieles B."/>
            <person name="Janson A.A.M."/>
            <person name="Thole J.E.R."/>
        </authorList>
    </citation>
    <scope>NUCLEOTIDE SEQUENCE [GENOMIC DNA] OF 1-220</scope>
</reference>
<name>MPT51_MYCLE</name>
<evidence type="ECO:0000250" key="1"/>
<evidence type="ECO:0000255" key="2"/>
<evidence type="ECO:0000305" key="3"/>
<proteinExistence type="inferred from homology"/>
<accession>Q05868</accession>
<accession>Q50207</accession>
<sequence length="301" mass="31191">MRGLSAVVRVLCVAALAVGVFAAAVLLAGTAGNAKAAGYESLMVPSNAMGRDIPVAFMAGGPHAVYLLDAFNAALDVSNWVTAGNAMTTLGGRGISVVAPAGGAYSMYTNWENDGSKQWDTFLSSELPDWLATKRGLAPDGHAAVGASQGGYAALALAAFHPDRFGFAGSLSGFVYPSSTNYNGAILAGLQQFGGIDGNGMWGAPQLGRWKWHDPYVHASLLAQNNTRVWVYSPMTMGGDIDAMIGQAVASMGSSREFYQQYRSVGGHNGHFDFSGGGDNGWGAWAPQLAAMSGDIVGAIR</sequence>
<dbReference type="EMBL" id="D50488">
    <property type="protein sequence ID" value="BAA09079.1"/>
    <property type="molecule type" value="Genomic_DNA"/>
</dbReference>
<dbReference type="EMBL" id="AL583917">
    <property type="protein sequence ID" value="CAC29606.1"/>
    <property type="molecule type" value="Genomic_DNA"/>
</dbReference>
<dbReference type="EMBL" id="Z21949">
    <property type="protein sequence ID" value="CAA79947.1"/>
    <property type="molecule type" value="Genomic_DNA"/>
</dbReference>
<dbReference type="PIR" id="B86921">
    <property type="entry name" value="B86921"/>
</dbReference>
<dbReference type="PIR" id="S32111">
    <property type="entry name" value="S32111"/>
</dbReference>
<dbReference type="RefSeq" id="NP_301196.1">
    <property type="nucleotide sequence ID" value="NC_002677.1"/>
</dbReference>
<dbReference type="RefSeq" id="WP_010907521.1">
    <property type="nucleotide sequence ID" value="NC_002677.1"/>
</dbReference>
<dbReference type="SMR" id="Q05868"/>
<dbReference type="STRING" id="272631.gene:17573910"/>
<dbReference type="ESTHER" id="mycle-mpt5">
    <property type="family name" value="A85-Mycolyl-transferase"/>
</dbReference>
<dbReference type="KEGG" id="mle:ML0098"/>
<dbReference type="PATRIC" id="fig|272631.5.peg.152"/>
<dbReference type="Leproma" id="ML0098"/>
<dbReference type="eggNOG" id="COG0627">
    <property type="taxonomic scope" value="Bacteria"/>
</dbReference>
<dbReference type="HOGENOM" id="CLU_026624_3_1_11"/>
<dbReference type="OrthoDB" id="4366784at2"/>
<dbReference type="Proteomes" id="UP000000806">
    <property type="component" value="Chromosome"/>
</dbReference>
<dbReference type="GO" id="GO:0005576">
    <property type="term" value="C:extracellular region"/>
    <property type="evidence" value="ECO:0007669"/>
    <property type="project" value="UniProtKB-SubCell"/>
</dbReference>
<dbReference type="GO" id="GO:0016747">
    <property type="term" value="F:acyltransferase activity, transferring groups other than amino-acyl groups"/>
    <property type="evidence" value="ECO:0007669"/>
    <property type="project" value="TreeGrafter"/>
</dbReference>
<dbReference type="Gene3D" id="3.40.50.1820">
    <property type="entry name" value="alpha/beta hydrolase"/>
    <property type="match status" value="1"/>
</dbReference>
<dbReference type="InterPro" id="IPR029058">
    <property type="entry name" value="AB_hydrolase_fold"/>
</dbReference>
<dbReference type="InterPro" id="IPR000801">
    <property type="entry name" value="Esterase-like"/>
</dbReference>
<dbReference type="InterPro" id="IPR050583">
    <property type="entry name" value="Mycobacterial_A85_antigen"/>
</dbReference>
<dbReference type="PANTHER" id="PTHR48098:SF1">
    <property type="entry name" value="DIACYLGLYCEROL ACYLTRANSFERASE_MYCOLYLTRANSFERASE AG85A"/>
    <property type="match status" value="1"/>
</dbReference>
<dbReference type="PANTHER" id="PTHR48098">
    <property type="entry name" value="ENTEROCHELIN ESTERASE-RELATED"/>
    <property type="match status" value="1"/>
</dbReference>
<dbReference type="Pfam" id="PF00756">
    <property type="entry name" value="Esterase"/>
    <property type="match status" value="1"/>
</dbReference>
<dbReference type="SUPFAM" id="SSF53474">
    <property type="entry name" value="alpha/beta-Hydrolases"/>
    <property type="match status" value="1"/>
</dbReference>
<comment type="function">
    <text evidence="1">May have a role in host tissue attachment, whereby ligands may include the serum protein fibronectin and small sugars.</text>
</comment>
<comment type="subunit">
    <text evidence="1">Homodimer.</text>
</comment>
<comment type="subcellular location">
    <subcellularLocation>
        <location evidence="1">Secreted</location>
    </subcellularLocation>
</comment>
<comment type="similarity">
    <text evidence="3">Belongs to the mycobacterial A85 antigen family.</text>
</comment>
<gene>
    <name type="primary">mpt51</name>
    <name type="ordered locus">ML0098</name>
</gene>